<comment type="function">
    <text evidence="3">Inverting glycosyltransferase that catalyzes the transfer of one glucose moiety from UDP-glucose to an asparagine residue in peptides and proteins containing the NX(S/T) motif, resulting in their modification with a beta-linked 1,N-glucose. Likely acts as a key component of a general protein glycosylation system (Probable).</text>
</comment>
<comment type="catalytic activity">
    <reaction>
        <text>L-asparaginyl-[protein] + UDP-alpha-D-glucose = N(4)-(beta-D-glucosyl)-L-asparaginyl-[protein] + UDP + H(+)</text>
        <dbReference type="Rhea" id="RHEA:45952"/>
        <dbReference type="Rhea" id="RHEA-COMP:11400"/>
        <dbReference type="Rhea" id="RHEA-COMP:12804"/>
        <dbReference type="ChEBI" id="CHEBI:15378"/>
        <dbReference type="ChEBI" id="CHEBI:50347"/>
        <dbReference type="ChEBI" id="CHEBI:58223"/>
        <dbReference type="ChEBI" id="CHEBI:58885"/>
        <dbReference type="ChEBI" id="CHEBI:85501"/>
    </reaction>
</comment>
<comment type="pathway">
    <text>Protein modification; protein glycosylation.</text>
</comment>
<comment type="subcellular location">
    <subcellularLocation>
        <location evidence="1">Cytoplasm</location>
    </subcellularLocation>
</comment>
<comment type="similarity">
    <text evidence="2">Belongs to the glycosyltransferase 41 family.</text>
</comment>
<feature type="chain" id="PRO_0000430338" description="UDP-glucose:protein N-beta-glucosyltransferase">
    <location>
        <begin position="1"/>
        <end position="620"/>
    </location>
</feature>
<feature type="helix" evidence="4">
    <location>
        <begin position="9"/>
        <end position="17"/>
    </location>
</feature>
<feature type="helix" evidence="4">
    <location>
        <begin position="21"/>
        <end position="37"/>
    </location>
</feature>
<feature type="turn" evidence="4">
    <location>
        <begin position="38"/>
        <end position="40"/>
    </location>
</feature>
<feature type="helix" evidence="4">
    <location>
        <begin position="51"/>
        <end position="53"/>
    </location>
</feature>
<feature type="helix" evidence="4">
    <location>
        <begin position="57"/>
        <end position="77"/>
    </location>
</feature>
<feature type="helix" evidence="4">
    <location>
        <begin position="85"/>
        <end position="93"/>
    </location>
</feature>
<feature type="helix" evidence="4">
    <location>
        <begin position="95"/>
        <end position="103"/>
    </location>
</feature>
<feature type="helix" evidence="4">
    <location>
        <begin position="111"/>
        <end position="114"/>
    </location>
</feature>
<feature type="helix" evidence="4">
    <location>
        <begin position="115"/>
        <end position="117"/>
    </location>
</feature>
<feature type="helix" evidence="4">
    <location>
        <begin position="135"/>
        <end position="143"/>
    </location>
</feature>
<feature type="helix" evidence="4">
    <location>
        <begin position="155"/>
        <end position="161"/>
    </location>
</feature>
<feature type="helix" evidence="4">
    <location>
        <begin position="163"/>
        <end position="172"/>
    </location>
</feature>
<feature type="helix" evidence="4">
    <location>
        <begin position="182"/>
        <end position="199"/>
    </location>
</feature>
<feature type="helix" evidence="4">
    <location>
        <begin position="210"/>
        <end position="212"/>
    </location>
</feature>
<feature type="helix" evidence="4">
    <location>
        <begin position="213"/>
        <end position="219"/>
    </location>
</feature>
<feature type="helix" evidence="4">
    <location>
        <begin position="220"/>
        <end position="222"/>
    </location>
</feature>
<feature type="turn" evidence="4">
    <location>
        <begin position="226"/>
        <end position="229"/>
    </location>
</feature>
<feature type="helix" evidence="4">
    <location>
        <begin position="230"/>
        <end position="246"/>
    </location>
</feature>
<feature type="strand" evidence="4">
    <location>
        <begin position="263"/>
        <end position="269"/>
    </location>
</feature>
<feature type="helix" evidence="4">
    <location>
        <begin position="278"/>
        <end position="289"/>
    </location>
</feature>
<feature type="helix" evidence="4">
    <location>
        <begin position="290"/>
        <end position="292"/>
    </location>
</feature>
<feature type="strand" evidence="4">
    <location>
        <begin position="295"/>
        <end position="300"/>
    </location>
</feature>
<feature type="helix" evidence="4">
    <location>
        <begin position="306"/>
        <end position="309"/>
    </location>
</feature>
<feature type="strand" evidence="4">
    <location>
        <begin position="312"/>
        <end position="317"/>
    </location>
</feature>
<feature type="helix" evidence="4">
    <location>
        <begin position="323"/>
        <end position="337"/>
    </location>
</feature>
<feature type="strand" evidence="4">
    <location>
        <begin position="340"/>
        <end position="345"/>
    </location>
</feature>
<feature type="strand" evidence="4">
    <location>
        <begin position="348"/>
        <end position="350"/>
    </location>
</feature>
<feature type="helix" evidence="4">
    <location>
        <begin position="351"/>
        <end position="356"/>
    </location>
</feature>
<feature type="strand" evidence="4">
    <location>
        <begin position="362"/>
        <end position="368"/>
    </location>
</feature>
<feature type="strand" evidence="4">
    <location>
        <begin position="382"/>
        <end position="386"/>
    </location>
</feature>
<feature type="helix" evidence="4">
    <location>
        <begin position="387"/>
        <end position="389"/>
    </location>
</feature>
<feature type="helix" evidence="4">
    <location>
        <begin position="393"/>
        <end position="395"/>
    </location>
</feature>
<feature type="strand" evidence="4">
    <location>
        <begin position="397"/>
        <end position="403"/>
    </location>
</feature>
<feature type="strand" evidence="4">
    <location>
        <begin position="429"/>
        <end position="438"/>
    </location>
</feature>
<feature type="helix" evidence="4">
    <location>
        <begin position="439"/>
        <end position="441"/>
    </location>
</feature>
<feature type="helix" evidence="4">
    <location>
        <begin position="444"/>
        <end position="456"/>
    </location>
</feature>
<feature type="strand" evidence="4">
    <location>
        <begin position="458"/>
        <end position="469"/>
    </location>
</feature>
<feature type="helix" evidence="4">
    <location>
        <begin position="474"/>
        <end position="486"/>
    </location>
</feature>
<feature type="helix" evidence="4">
    <location>
        <begin position="487"/>
        <end position="489"/>
    </location>
</feature>
<feature type="strand" evidence="4">
    <location>
        <begin position="490"/>
        <end position="493"/>
    </location>
</feature>
<feature type="helix" evidence="4">
    <location>
        <begin position="498"/>
        <end position="506"/>
    </location>
</feature>
<feature type="strand" evidence="4">
    <location>
        <begin position="509"/>
        <end position="512"/>
    </location>
</feature>
<feature type="strand" evidence="4">
    <location>
        <begin position="515"/>
        <end position="517"/>
    </location>
</feature>
<feature type="helix" evidence="4">
    <location>
        <begin position="521"/>
        <end position="528"/>
    </location>
</feature>
<feature type="strand" evidence="4">
    <location>
        <begin position="533"/>
        <end position="536"/>
    </location>
</feature>
<feature type="helix" evidence="4">
    <location>
        <begin position="541"/>
        <end position="553"/>
    </location>
</feature>
<feature type="strand" evidence="4">
    <location>
        <begin position="559"/>
        <end position="563"/>
    </location>
</feature>
<feature type="helix" evidence="4">
    <location>
        <begin position="564"/>
        <end position="576"/>
    </location>
</feature>
<feature type="helix" evidence="4">
    <location>
        <begin position="578"/>
        <end position="591"/>
    </location>
</feature>
<feature type="helix" evidence="4">
    <location>
        <begin position="594"/>
        <end position="597"/>
    </location>
</feature>
<feature type="helix" evidence="4">
    <location>
        <begin position="604"/>
        <end position="618"/>
    </location>
</feature>
<proteinExistence type="evidence at protein level"/>
<protein>
    <recommendedName>
        <fullName>UDP-glucose:protein N-beta-glucosyltransferase</fullName>
        <shortName>UDP-Glc:protein N-glucosyltransferase</shortName>
        <ecNumber>2.4.1.-</ecNumber>
    </recommendedName>
    <alternativeName>
        <fullName>HMW1C-like protein</fullName>
    </alternativeName>
    <alternativeName>
        <fullName>N-glycosyltransferase</fullName>
        <shortName>NGT</shortName>
    </alternativeName>
</protein>
<organism>
    <name type="scientific">Actinobacillus pleuropneumoniae serotype 5b (strain L20)</name>
    <dbReference type="NCBI Taxonomy" id="416269"/>
    <lineage>
        <taxon>Bacteria</taxon>
        <taxon>Pseudomonadati</taxon>
        <taxon>Pseudomonadota</taxon>
        <taxon>Gammaproteobacteria</taxon>
        <taxon>Pasteurellales</taxon>
        <taxon>Pasteurellaceae</taxon>
        <taxon>Actinobacillus</taxon>
    </lineage>
</organism>
<sequence length="620" mass="70494">MENENKPNVANFEAAVAAKDYEKACSELLLILSQLDSNFGGIHEIEFEYPAQLQDLEQEKIVYFCTRMATAITTLFSDPVLEISDLGVQRFLVYQRWLALIFASSPFVNADHILQTYNREPNRKNSLEIHLDSSKSSLIKFCILYLPESNVNLNLDVMWNISPELCASLCFALQSPRFVGTSTAFNKRATILQWFPRHLDQLKNLNNIPSAISHDVYMHCSYDTSVNKHDVKRALNHVIRRHIESEYGWKDRDVAHIGYRNNKPVMVVLLEHFHSAHSIYRTHSTSMIAAREHFYLIGLGSPSVDQAGQEVFDEFHLVAGDNMKQKLEFIRSVCESNGAAIFYMPSIGMDMTTIFASNTRLAPIQAIALGHPATTHSDFIEYVIVEDDYVGSEECFSETLLRLPKDALPYVPSALAPEKVDYLLRENPEVVNIGIASTTMKLNPYFLEALKAIRDRAKVKVHFHFALGQSNGITHPYVERFIKSYLGDSATAHPHSPYHQYLRILHNCDMMVNPFPFGNTNGIIDMVTLGLVGVCKTGAEVHEHIDEGLFKRLGLPEWLIANTVDEYVERAVRLAENHQERLELRRYIIENNGLNTLFTGDPRPMGQVFLEKLNAFLKEN</sequence>
<gene>
    <name type="ordered locus">APL_1635</name>
</gene>
<reference key="1">
    <citation type="journal article" date="2008" name="J. Bacteriol.">
        <title>The complete genome sequence of Actinobacillus pleuropneumoniae L20 (serotype 5b).</title>
        <authorList>
            <person name="Foote S.J."/>
            <person name="Bosse J.T."/>
            <person name="Bouevitch A.B."/>
            <person name="Langford P.R."/>
            <person name="Young N.M."/>
            <person name="Nash J.H.E."/>
        </authorList>
    </citation>
    <scope>NUCLEOTIDE SEQUENCE [LARGE SCALE GENOMIC DNA]</scope>
    <source>
        <strain>L20</strain>
    </source>
</reference>
<reference key="2">
    <citation type="journal article" date="2011" name="J. Biol. Chem.">
        <title>Cytoplasmic N-glycosyltransferase of Actinobacillus pleuropneumoniae is an inverting enzyme and recognizes the NX(S/T) consensus sequence.</title>
        <authorList>
            <person name="Schwarz F."/>
            <person name="Fan Y.Y."/>
            <person name="Schubert M."/>
            <person name="Aebi M."/>
        </authorList>
    </citation>
    <scope>FUNCTION AS A GLUCOSYLTRANSFERASE</scope>
    <source>
        <strain>L20</strain>
    </source>
</reference>
<evidence type="ECO:0000250" key="1"/>
<evidence type="ECO:0000305" key="2"/>
<evidence type="ECO:0000305" key="3">
    <source>
    </source>
</evidence>
<evidence type="ECO:0007829" key="4">
    <source>
        <dbReference type="PDB" id="8J30"/>
    </source>
</evidence>
<dbReference type="EC" id="2.4.1.-"/>
<dbReference type="EMBL" id="CP000569">
    <property type="protein sequence ID" value="ABN74719.1"/>
    <property type="molecule type" value="Genomic_DNA"/>
</dbReference>
<dbReference type="RefSeq" id="WP_005605627.1">
    <property type="nucleotide sequence ID" value="NC_009053.1"/>
</dbReference>
<dbReference type="PDB" id="8J30">
    <property type="method" value="X-ray"/>
    <property type="resolution" value="2.89 A"/>
    <property type="chains" value="A/B=1-620"/>
</dbReference>
<dbReference type="PDBsum" id="8J30"/>
<dbReference type="SMR" id="A3N2T3"/>
<dbReference type="STRING" id="416269.APL_1635"/>
<dbReference type="CAZy" id="GT41">
    <property type="family name" value="Glycosyltransferase Family 41"/>
</dbReference>
<dbReference type="EnsemblBacteria" id="ABN74719">
    <property type="protein sequence ID" value="ABN74719"/>
    <property type="gene ID" value="APL_1635"/>
</dbReference>
<dbReference type="KEGG" id="apl:APL_1635"/>
<dbReference type="eggNOG" id="COG3914">
    <property type="taxonomic scope" value="Bacteria"/>
</dbReference>
<dbReference type="HOGENOM" id="CLU_441347_0_0_6"/>
<dbReference type="UniPathway" id="UPA00378"/>
<dbReference type="Proteomes" id="UP000001432">
    <property type="component" value="Chromosome"/>
</dbReference>
<dbReference type="GO" id="GO:0005737">
    <property type="term" value="C:cytoplasm"/>
    <property type="evidence" value="ECO:0007669"/>
    <property type="project" value="UniProtKB-SubCell"/>
</dbReference>
<dbReference type="GO" id="GO:0016757">
    <property type="term" value="F:glycosyltransferase activity"/>
    <property type="evidence" value="ECO:0007669"/>
    <property type="project" value="UniProtKB-KW"/>
</dbReference>
<dbReference type="GO" id="GO:0006486">
    <property type="term" value="P:protein glycosylation"/>
    <property type="evidence" value="ECO:0007669"/>
    <property type="project" value="UniProtKB-UniPathway"/>
</dbReference>
<dbReference type="FunFam" id="3.40.50.2000:FF:000272">
    <property type="entry name" value="Adhesin"/>
    <property type="match status" value="1"/>
</dbReference>
<dbReference type="Gene3D" id="3.40.50.11380">
    <property type="match status" value="1"/>
</dbReference>
<dbReference type="Gene3D" id="3.40.50.2000">
    <property type="entry name" value="Glycogen Phosphorylase B"/>
    <property type="match status" value="1"/>
</dbReference>
<dbReference type="InterPro" id="IPR051939">
    <property type="entry name" value="Glycosyltr_41/O-GlcNAc_trsf"/>
</dbReference>
<dbReference type="InterPro" id="IPR040542">
    <property type="entry name" value="HMW1_D2"/>
</dbReference>
<dbReference type="InterPro" id="IPR041109">
    <property type="entry name" value="HMW1C_N"/>
</dbReference>
<dbReference type="PANTHER" id="PTHR44835:SF1">
    <property type="entry name" value="PROTEIN O-GLCNAC TRANSFERASE"/>
    <property type="match status" value="1"/>
</dbReference>
<dbReference type="PANTHER" id="PTHR44835">
    <property type="entry name" value="UDP-N-ACETYLGLUCOSAMINE--PEPTIDE N-ACETYLGLUCOSAMINYLTRANSFERASE SPINDLY-RELATED"/>
    <property type="match status" value="1"/>
</dbReference>
<dbReference type="Pfam" id="PF18254">
    <property type="entry name" value="HMw1_D2"/>
    <property type="match status" value="1"/>
</dbReference>
<dbReference type="Pfam" id="PF18071">
    <property type="entry name" value="HMW1C_N"/>
    <property type="match status" value="1"/>
</dbReference>
<name>NGT_ACTP2</name>
<accession>A3N2T3</accession>
<keyword id="KW-0002">3D-structure</keyword>
<keyword id="KW-0963">Cytoplasm</keyword>
<keyword id="KW-0328">Glycosyltransferase</keyword>
<keyword id="KW-1185">Reference proteome</keyword>
<keyword id="KW-0808">Transferase</keyword>